<evidence type="ECO:0000255" key="1"/>
<evidence type="ECO:0000256" key="2">
    <source>
        <dbReference type="SAM" id="MobiDB-lite"/>
    </source>
</evidence>
<evidence type="ECO:0000305" key="3"/>
<reference key="1">
    <citation type="journal article" date="2002" name="Lancet">
        <title>Genome and virulence determinants of high virulence community-acquired MRSA.</title>
        <authorList>
            <person name="Baba T."/>
            <person name="Takeuchi F."/>
            <person name="Kuroda M."/>
            <person name="Yuzawa H."/>
            <person name="Aoki K."/>
            <person name="Oguchi A."/>
            <person name="Nagai Y."/>
            <person name="Iwama N."/>
            <person name="Asano K."/>
            <person name="Naimi T."/>
            <person name="Kuroda H."/>
            <person name="Cui L."/>
            <person name="Yamamoto K."/>
            <person name="Hiramatsu K."/>
        </authorList>
    </citation>
    <scope>NUCLEOTIDE SEQUENCE [LARGE SCALE GENOMIC DNA]</scope>
    <source>
        <strain>MW2</strain>
    </source>
</reference>
<name>LUKL2_STAAW</name>
<accession>Q8NVL8</accession>
<protein>
    <recommendedName>
        <fullName>Uncharacterized leukocidin-like protein 2</fullName>
    </recommendedName>
</protein>
<sequence>MKNKKRVLIASSLSCAILLLSAATTQANSAHKDSQDQNKKEHVDKSQQKEKRNVTNKDKNSTVPDDIGKNGKITKRTETVYDEKTNILQNLQFDFIDDPTYDKNVLLVKKQGSIHSNLKFESHKEEKNSNWLKYPSEYHVDFQVKRNPKTEILDQLPKNKISTAKVDSTFSYSSGGKFDSTKGIGRTSSNSYSKTISYNQQNYDTIASGKNNNWHVHWSVIANDLKYGGEVKNRNDELLFYRNTRIATVENPELSFASKYRYPALVRSGFNPEFLTYLSNEKSNEKTQFEVTYTRNQDILKNRPGIHYAPPILEKNKEGQRLIVTYEVDWKNKTVKVVDKYSDNKSFREG</sequence>
<organism>
    <name type="scientific">Staphylococcus aureus (strain MW2)</name>
    <dbReference type="NCBI Taxonomy" id="196620"/>
    <lineage>
        <taxon>Bacteria</taxon>
        <taxon>Bacillati</taxon>
        <taxon>Bacillota</taxon>
        <taxon>Bacilli</taxon>
        <taxon>Bacillales</taxon>
        <taxon>Staphylococcaceae</taxon>
        <taxon>Staphylococcus</taxon>
    </lineage>
</organism>
<keyword id="KW-0732">Signal</keyword>
<comment type="similarity">
    <text evidence="3">Belongs to the aerolysin family.</text>
</comment>
<gene>
    <name type="ordered locus">MW1942</name>
</gene>
<dbReference type="EMBL" id="BA000033">
    <property type="protein sequence ID" value="BAB95807.1"/>
    <property type="molecule type" value="Genomic_DNA"/>
</dbReference>
<dbReference type="SMR" id="Q8NVL8"/>
<dbReference type="KEGG" id="sam:MW1942"/>
<dbReference type="HOGENOM" id="CLU_865755_0_0_9"/>
<dbReference type="GO" id="GO:0005576">
    <property type="term" value="C:extracellular region"/>
    <property type="evidence" value="ECO:0007669"/>
    <property type="project" value="InterPro"/>
</dbReference>
<dbReference type="GO" id="GO:0051715">
    <property type="term" value="P:cytolysis in another organism"/>
    <property type="evidence" value="ECO:0007669"/>
    <property type="project" value="InterPro"/>
</dbReference>
<dbReference type="Gene3D" id="2.70.240.10">
    <property type="entry name" value="Leukocidin/porin MspA"/>
    <property type="match status" value="1"/>
</dbReference>
<dbReference type="InterPro" id="IPR003963">
    <property type="entry name" value="Bi-component_toxin_staph"/>
</dbReference>
<dbReference type="InterPro" id="IPR016183">
    <property type="entry name" value="Leukocidin/Hemolysin_toxin"/>
</dbReference>
<dbReference type="InterPro" id="IPR036435">
    <property type="entry name" value="Leukocidin/porin_MspA_sf"/>
</dbReference>
<dbReference type="Pfam" id="PF07968">
    <property type="entry name" value="Leukocidin"/>
    <property type="match status" value="1"/>
</dbReference>
<dbReference type="PRINTS" id="PR01468">
    <property type="entry name" value="BICOMPNTOXIN"/>
</dbReference>
<dbReference type="SUPFAM" id="SSF56959">
    <property type="entry name" value="Leukocidin-like"/>
    <property type="match status" value="1"/>
</dbReference>
<proteinExistence type="inferred from homology"/>
<feature type="signal peptide" evidence="1">
    <location>
        <begin position="1"/>
        <end position="27"/>
    </location>
</feature>
<feature type="chain" id="PRO_0000298644" description="Uncharacterized leukocidin-like protein 2">
    <location>
        <begin position="28"/>
        <end position="350"/>
    </location>
</feature>
<feature type="region of interest" description="Disordered" evidence="2">
    <location>
        <begin position="28"/>
        <end position="71"/>
    </location>
</feature>
<feature type="compositionally biased region" description="Basic and acidic residues" evidence="2">
    <location>
        <begin position="30"/>
        <end position="60"/>
    </location>
</feature>